<evidence type="ECO:0000255" key="1">
    <source>
        <dbReference type="HAMAP-Rule" id="MF_00050"/>
    </source>
</evidence>
<keyword id="KW-0963">Cytoplasm</keyword>
<keyword id="KW-0251">Elongation factor</keyword>
<keyword id="KW-0648">Protein biosynthesis</keyword>
<keyword id="KW-1185">Reference proteome</keyword>
<dbReference type="EMBL" id="AE017125">
    <property type="protein sequence ID" value="AAP77668.1"/>
    <property type="molecule type" value="Genomic_DNA"/>
</dbReference>
<dbReference type="RefSeq" id="WP_011115911.1">
    <property type="nucleotide sequence ID" value="NC_004917.1"/>
</dbReference>
<dbReference type="SMR" id="Q7VH96"/>
<dbReference type="STRING" id="235279.HH_1071"/>
<dbReference type="KEGG" id="hhe:HH_1071"/>
<dbReference type="eggNOG" id="COG0264">
    <property type="taxonomic scope" value="Bacteria"/>
</dbReference>
<dbReference type="HOGENOM" id="CLU_047155_0_1_7"/>
<dbReference type="OrthoDB" id="9808348at2"/>
<dbReference type="Proteomes" id="UP000002495">
    <property type="component" value="Chromosome"/>
</dbReference>
<dbReference type="GO" id="GO:0005737">
    <property type="term" value="C:cytoplasm"/>
    <property type="evidence" value="ECO:0007669"/>
    <property type="project" value="UniProtKB-SubCell"/>
</dbReference>
<dbReference type="GO" id="GO:0003746">
    <property type="term" value="F:translation elongation factor activity"/>
    <property type="evidence" value="ECO:0007669"/>
    <property type="project" value="UniProtKB-UniRule"/>
</dbReference>
<dbReference type="CDD" id="cd14275">
    <property type="entry name" value="UBA_EF-Ts"/>
    <property type="match status" value="1"/>
</dbReference>
<dbReference type="FunFam" id="1.10.8.10:FF:000001">
    <property type="entry name" value="Elongation factor Ts"/>
    <property type="match status" value="1"/>
</dbReference>
<dbReference type="Gene3D" id="1.10.286.20">
    <property type="match status" value="1"/>
</dbReference>
<dbReference type="Gene3D" id="1.10.8.10">
    <property type="entry name" value="DNA helicase RuvA subunit, C-terminal domain"/>
    <property type="match status" value="1"/>
</dbReference>
<dbReference type="Gene3D" id="3.30.479.20">
    <property type="entry name" value="Elongation factor Ts, dimerisation domain"/>
    <property type="match status" value="2"/>
</dbReference>
<dbReference type="HAMAP" id="MF_00050">
    <property type="entry name" value="EF_Ts"/>
    <property type="match status" value="1"/>
</dbReference>
<dbReference type="InterPro" id="IPR036402">
    <property type="entry name" value="EF-Ts_dimer_sf"/>
</dbReference>
<dbReference type="InterPro" id="IPR001816">
    <property type="entry name" value="Transl_elong_EFTs/EF1B"/>
</dbReference>
<dbReference type="InterPro" id="IPR014039">
    <property type="entry name" value="Transl_elong_EFTs/EF1B_dimer"/>
</dbReference>
<dbReference type="InterPro" id="IPR018101">
    <property type="entry name" value="Transl_elong_Ts_CS"/>
</dbReference>
<dbReference type="InterPro" id="IPR009060">
    <property type="entry name" value="UBA-like_sf"/>
</dbReference>
<dbReference type="NCBIfam" id="TIGR00116">
    <property type="entry name" value="tsf"/>
    <property type="match status" value="2"/>
</dbReference>
<dbReference type="PANTHER" id="PTHR11741">
    <property type="entry name" value="ELONGATION FACTOR TS"/>
    <property type="match status" value="1"/>
</dbReference>
<dbReference type="PANTHER" id="PTHR11741:SF0">
    <property type="entry name" value="ELONGATION FACTOR TS, MITOCHONDRIAL"/>
    <property type="match status" value="1"/>
</dbReference>
<dbReference type="Pfam" id="PF00889">
    <property type="entry name" value="EF_TS"/>
    <property type="match status" value="2"/>
</dbReference>
<dbReference type="SUPFAM" id="SSF54713">
    <property type="entry name" value="Elongation factor Ts (EF-Ts), dimerisation domain"/>
    <property type="match status" value="3"/>
</dbReference>
<dbReference type="SUPFAM" id="SSF46934">
    <property type="entry name" value="UBA-like"/>
    <property type="match status" value="1"/>
</dbReference>
<dbReference type="PROSITE" id="PS01126">
    <property type="entry name" value="EF_TS_1"/>
    <property type="match status" value="1"/>
</dbReference>
<dbReference type="PROSITE" id="PS01127">
    <property type="entry name" value="EF_TS_2"/>
    <property type="match status" value="1"/>
</dbReference>
<comment type="function">
    <text evidence="1">Associates with the EF-Tu.GDP complex and induces the exchange of GDP to GTP. It remains bound to the aminoacyl-tRNA.EF-Tu.GTP complex up to the GTP hydrolysis stage on the ribosome.</text>
</comment>
<comment type="subcellular location">
    <subcellularLocation>
        <location evidence="1">Cytoplasm</location>
    </subcellularLocation>
</comment>
<comment type="similarity">
    <text evidence="1">Belongs to the EF-Ts family.</text>
</comment>
<feature type="chain" id="PRO_0000161130" description="Elongation factor Ts">
    <location>
        <begin position="1"/>
        <end position="355"/>
    </location>
</feature>
<feature type="region of interest" description="Involved in Mg(2+) ion dislocation from EF-Tu" evidence="1">
    <location>
        <begin position="82"/>
        <end position="85"/>
    </location>
</feature>
<reference key="1">
    <citation type="journal article" date="2003" name="Proc. Natl. Acad. Sci. U.S.A.">
        <title>The complete genome sequence of the carcinogenic bacterium Helicobacter hepaticus.</title>
        <authorList>
            <person name="Suerbaum S."/>
            <person name="Josenhans C."/>
            <person name="Sterzenbach T."/>
            <person name="Drescher B."/>
            <person name="Brandt P."/>
            <person name="Bell M."/>
            <person name="Droege M."/>
            <person name="Fartmann B."/>
            <person name="Fischer H.-P."/>
            <person name="Ge Z."/>
            <person name="Hoerster A."/>
            <person name="Holland R."/>
            <person name="Klein K."/>
            <person name="Koenig J."/>
            <person name="Macko L."/>
            <person name="Mendz G.L."/>
            <person name="Nyakatura G."/>
            <person name="Schauer D.B."/>
            <person name="Shen Z."/>
            <person name="Weber J."/>
            <person name="Frosch M."/>
            <person name="Fox J.G."/>
        </authorList>
    </citation>
    <scope>NUCLEOTIDE SEQUENCE [LARGE SCALE GENOMIC DNA]</scope>
    <source>
        <strain>ATCC 51449 / 3B1</strain>
    </source>
</reference>
<gene>
    <name evidence="1" type="primary">tsf</name>
    <name type="ordered locus">HH_1071</name>
</gene>
<organism>
    <name type="scientific">Helicobacter hepaticus (strain ATCC 51449 / 3B1)</name>
    <dbReference type="NCBI Taxonomy" id="235279"/>
    <lineage>
        <taxon>Bacteria</taxon>
        <taxon>Pseudomonadati</taxon>
        <taxon>Campylobacterota</taxon>
        <taxon>Epsilonproteobacteria</taxon>
        <taxon>Campylobacterales</taxon>
        <taxon>Helicobacteraceae</taxon>
        <taxon>Helicobacter</taxon>
    </lineage>
</organism>
<protein>
    <recommendedName>
        <fullName evidence="1">Elongation factor Ts</fullName>
        <shortName evidence="1">EF-Ts</shortName>
    </recommendedName>
</protein>
<name>EFTS_HELHP</name>
<accession>Q7VH96</accession>
<proteinExistence type="inferred from homology"/>
<sequence>MADIPAQLVKQLREMTDAGMMDCKKALVETEGNLEKAVEYLREKGLSKAAKKADRIASEGIVSVEVANDFSKASIIEINSETDFVAKNDTFKELVAQTSKIVYDNALSSAQSLHTMSIGGVKFEEYLQQNIAKIGENIVVRRIASIEAQGKGIVNGYVHSNGRVGVLIAMKFDKESSKVACVELAKSICMHAAAMKPQVLSYTQLEYEFIQKEKVALIAELQKENEEFKRLGKPLHKIPQYISRSELTESVLQAQEQKLREDLKAQGKPEAIWDKILPGQMERFVADSTLLDQRLTLLGQFYVMDDKKTIAQVLEAKSKELGDEIEIIEYIRFELGEGIEKKVEDFAAEVAAQMQ</sequence>